<organism>
    <name type="scientific">Bradyrhizobium sp. (strain ORS 278)</name>
    <dbReference type="NCBI Taxonomy" id="114615"/>
    <lineage>
        <taxon>Bacteria</taxon>
        <taxon>Pseudomonadati</taxon>
        <taxon>Pseudomonadota</taxon>
        <taxon>Alphaproteobacteria</taxon>
        <taxon>Hyphomicrobiales</taxon>
        <taxon>Nitrobacteraceae</taxon>
        <taxon>Bradyrhizobium</taxon>
    </lineage>
</organism>
<feature type="chain" id="PRO_1000008207" description="Translation initiation factor IF-2">
    <location>
        <begin position="1"/>
        <end position="921"/>
    </location>
</feature>
<feature type="domain" description="tr-type G">
    <location>
        <begin position="417"/>
        <end position="586"/>
    </location>
</feature>
<feature type="region of interest" description="Disordered" evidence="3">
    <location>
        <begin position="1"/>
        <end position="296"/>
    </location>
</feature>
<feature type="region of interest" description="G1" evidence="1">
    <location>
        <begin position="426"/>
        <end position="433"/>
    </location>
</feature>
<feature type="region of interest" description="G2" evidence="1">
    <location>
        <begin position="451"/>
        <end position="455"/>
    </location>
</feature>
<feature type="region of interest" description="G3" evidence="1">
    <location>
        <begin position="474"/>
        <end position="477"/>
    </location>
</feature>
<feature type="region of interest" description="G4" evidence="1">
    <location>
        <begin position="528"/>
        <end position="531"/>
    </location>
</feature>
<feature type="region of interest" description="G5" evidence="1">
    <location>
        <begin position="564"/>
        <end position="566"/>
    </location>
</feature>
<feature type="compositionally biased region" description="Low complexity" evidence="3">
    <location>
        <begin position="80"/>
        <end position="89"/>
    </location>
</feature>
<feature type="compositionally biased region" description="Basic and acidic residues" evidence="3">
    <location>
        <begin position="117"/>
        <end position="183"/>
    </location>
</feature>
<feature type="compositionally biased region" description="Low complexity" evidence="3">
    <location>
        <begin position="184"/>
        <end position="237"/>
    </location>
</feature>
<feature type="compositionally biased region" description="Low complexity" evidence="3">
    <location>
        <begin position="248"/>
        <end position="257"/>
    </location>
</feature>
<feature type="binding site" evidence="2">
    <location>
        <begin position="426"/>
        <end position="433"/>
    </location>
    <ligand>
        <name>GTP</name>
        <dbReference type="ChEBI" id="CHEBI:37565"/>
    </ligand>
</feature>
<feature type="binding site" evidence="2">
    <location>
        <begin position="474"/>
        <end position="478"/>
    </location>
    <ligand>
        <name>GTP</name>
        <dbReference type="ChEBI" id="CHEBI:37565"/>
    </ligand>
</feature>
<feature type="binding site" evidence="2">
    <location>
        <begin position="528"/>
        <end position="531"/>
    </location>
    <ligand>
        <name>GTP</name>
        <dbReference type="ChEBI" id="CHEBI:37565"/>
    </ligand>
</feature>
<evidence type="ECO:0000250" key="1"/>
<evidence type="ECO:0000255" key="2">
    <source>
        <dbReference type="HAMAP-Rule" id="MF_00100"/>
    </source>
</evidence>
<evidence type="ECO:0000256" key="3">
    <source>
        <dbReference type="SAM" id="MobiDB-lite"/>
    </source>
</evidence>
<comment type="function">
    <text evidence="2">One of the essential components for the initiation of protein synthesis. Protects formylmethionyl-tRNA from spontaneous hydrolysis and promotes its binding to the 30S ribosomal subunits. Also involved in the hydrolysis of GTP during the formation of the 70S ribosomal complex.</text>
</comment>
<comment type="subcellular location">
    <subcellularLocation>
        <location evidence="2">Cytoplasm</location>
    </subcellularLocation>
</comment>
<comment type="similarity">
    <text evidence="2">Belongs to the TRAFAC class translation factor GTPase superfamily. Classic translation factor GTPase family. IF-2 subfamily.</text>
</comment>
<accession>A4YJE9</accession>
<proteinExistence type="inferred from homology"/>
<reference key="1">
    <citation type="journal article" date="2007" name="Science">
        <title>Legumes symbioses: absence of nod genes in photosynthetic bradyrhizobia.</title>
        <authorList>
            <person name="Giraud E."/>
            <person name="Moulin L."/>
            <person name="Vallenet D."/>
            <person name="Barbe V."/>
            <person name="Cytryn E."/>
            <person name="Avarre J.-C."/>
            <person name="Jaubert M."/>
            <person name="Simon D."/>
            <person name="Cartieaux F."/>
            <person name="Prin Y."/>
            <person name="Bena G."/>
            <person name="Hannibal L."/>
            <person name="Fardoux J."/>
            <person name="Kojadinovic M."/>
            <person name="Vuillet L."/>
            <person name="Lajus A."/>
            <person name="Cruveiller S."/>
            <person name="Rouy Z."/>
            <person name="Mangenot S."/>
            <person name="Segurens B."/>
            <person name="Dossat C."/>
            <person name="Franck W.L."/>
            <person name="Chang W.-S."/>
            <person name="Saunders E."/>
            <person name="Bruce D."/>
            <person name="Richardson P."/>
            <person name="Normand P."/>
            <person name="Dreyfus B."/>
            <person name="Pignol D."/>
            <person name="Stacey G."/>
            <person name="Emerich D."/>
            <person name="Vermeglio A."/>
            <person name="Medigue C."/>
            <person name="Sadowsky M."/>
        </authorList>
    </citation>
    <scope>NUCLEOTIDE SEQUENCE [LARGE SCALE GENOMIC DNA]</scope>
    <source>
        <strain>ORS 278</strain>
    </source>
</reference>
<protein>
    <recommendedName>
        <fullName evidence="2">Translation initiation factor IF-2</fullName>
    </recommendedName>
</protein>
<dbReference type="EMBL" id="CU234118">
    <property type="protein sequence ID" value="CAL74025.1"/>
    <property type="molecule type" value="Genomic_DNA"/>
</dbReference>
<dbReference type="RefSeq" id="WP_011923327.1">
    <property type="nucleotide sequence ID" value="NC_009445.1"/>
</dbReference>
<dbReference type="SMR" id="A4YJE9"/>
<dbReference type="STRING" id="114615.BRADO0053"/>
<dbReference type="KEGG" id="bra:BRADO0053"/>
<dbReference type="eggNOG" id="COG0532">
    <property type="taxonomic scope" value="Bacteria"/>
</dbReference>
<dbReference type="HOGENOM" id="CLU_006301_10_0_5"/>
<dbReference type="OrthoDB" id="9811804at2"/>
<dbReference type="Proteomes" id="UP000001994">
    <property type="component" value="Chromosome"/>
</dbReference>
<dbReference type="GO" id="GO:0005829">
    <property type="term" value="C:cytosol"/>
    <property type="evidence" value="ECO:0007669"/>
    <property type="project" value="TreeGrafter"/>
</dbReference>
<dbReference type="GO" id="GO:0005525">
    <property type="term" value="F:GTP binding"/>
    <property type="evidence" value="ECO:0007669"/>
    <property type="project" value="UniProtKB-KW"/>
</dbReference>
<dbReference type="GO" id="GO:0003924">
    <property type="term" value="F:GTPase activity"/>
    <property type="evidence" value="ECO:0007669"/>
    <property type="project" value="UniProtKB-UniRule"/>
</dbReference>
<dbReference type="GO" id="GO:0097216">
    <property type="term" value="F:guanosine tetraphosphate binding"/>
    <property type="evidence" value="ECO:0007669"/>
    <property type="project" value="UniProtKB-ARBA"/>
</dbReference>
<dbReference type="GO" id="GO:0003743">
    <property type="term" value="F:translation initiation factor activity"/>
    <property type="evidence" value="ECO:0007669"/>
    <property type="project" value="UniProtKB-UniRule"/>
</dbReference>
<dbReference type="CDD" id="cd01887">
    <property type="entry name" value="IF2_eIF5B"/>
    <property type="match status" value="1"/>
</dbReference>
<dbReference type="CDD" id="cd03702">
    <property type="entry name" value="IF2_mtIF2_II"/>
    <property type="match status" value="1"/>
</dbReference>
<dbReference type="CDD" id="cd03692">
    <property type="entry name" value="mtIF2_IVc"/>
    <property type="match status" value="1"/>
</dbReference>
<dbReference type="FunFam" id="2.40.30.10:FF:000007">
    <property type="entry name" value="Translation initiation factor IF-2"/>
    <property type="match status" value="1"/>
</dbReference>
<dbReference type="FunFam" id="2.40.30.10:FF:000008">
    <property type="entry name" value="Translation initiation factor IF-2"/>
    <property type="match status" value="1"/>
</dbReference>
<dbReference type="FunFam" id="3.40.50.10050:FF:000001">
    <property type="entry name" value="Translation initiation factor IF-2"/>
    <property type="match status" value="1"/>
</dbReference>
<dbReference type="FunFam" id="3.40.50.300:FF:000019">
    <property type="entry name" value="Translation initiation factor IF-2"/>
    <property type="match status" value="1"/>
</dbReference>
<dbReference type="Gene3D" id="3.40.50.300">
    <property type="entry name" value="P-loop containing nucleotide triphosphate hydrolases"/>
    <property type="match status" value="1"/>
</dbReference>
<dbReference type="Gene3D" id="2.40.30.10">
    <property type="entry name" value="Translation factors"/>
    <property type="match status" value="2"/>
</dbReference>
<dbReference type="Gene3D" id="3.40.50.10050">
    <property type="entry name" value="Translation initiation factor IF- 2, domain 3"/>
    <property type="match status" value="1"/>
</dbReference>
<dbReference type="HAMAP" id="MF_00100_B">
    <property type="entry name" value="IF_2_B"/>
    <property type="match status" value="1"/>
</dbReference>
<dbReference type="InterPro" id="IPR053905">
    <property type="entry name" value="EF-G-like_DII"/>
</dbReference>
<dbReference type="InterPro" id="IPR004161">
    <property type="entry name" value="EFTu-like_2"/>
</dbReference>
<dbReference type="InterPro" id="IPR013575">
    <property type="entry name" value="IF2_assoc_dom_bac"/>
</dbReference>
<dbReference type="InterPro" id="IPR044145">
    <property type="entry name" value="IF2_II"/>
</dbReference>
<dbReference type="InterPro" id="IPR006847">
    <property type="entry name" value="IF2_N"/>
</dbReference>
<dbReference type="InterPro" id="IPR027417">
    <property type="entry name" value="P-loop_NTPase"/>
</dbReference>
<dbReference type="InterPro" id="IPR005225">
    <property type="entry name" value="Small_GTP-bd"/>
</dbReference>
<dbReference type="InterPro" id="IPR000795">
    <property type="entry name" value="T_Tr_GTP-bd_dom"/>
</dbReference>
<dbReference type="InterPro" id="IPR000178">
    <property type="entry name" value="TF_IF2_bacterial-like"/>
</dbReference>
<dbReference type="InterPro" id="IPR015760">
    <property type="entry name" value="TIF_IF2"/>
</dbReference>
<dbReference type="InterPro" id="IPR023115">
    <property type="entry name" value="TIF_IF2_dom3"/>
</dbReference>
<dbReference type="InterPro" id="IPR036925">
    <property type="entry name" value="TIF_IF2_dom3_sf"/>
</dbReference>
<dbReference type="InterPro" id="IPR009000">
    <property type="entry name" value="Transl_B-barrel_sf"/>
</dbReference>
<dbReference type="NCBIfam" id="TIGR00487">
    <property type="entry name" value="IF-2"/>
    <property type="match status" value="1"/>
</dbReference>
<dbReference type="NCBIfam" id="TIGR00231">
    <property type="entry name" value="small_GTP"/>
    <property type="match status" value="1"/>
</dbReference>
<dbReference type="PANTHER" id="PTHR43381:SF5">
    <property type="entry name" value="TR-TYPE G DOMAIN-CONTAINING PROTEIN"/>
    <property type="match status" value="1"/>
</dbReference>
<dbReference type="PANTHER" id="PTHR43381">
    <property type="entry name" value="TRANSLATION INITIATION FACTOR IF-2-RELATED"/>
    <property type="match status" value="1"/>
</dbReference>
<dbReference type="Pfam" id="PF22042">
    <property type="entry name" value="EF-G_D2"/>
    <property type="match status" value="1"/>
</dbReference>
<dbReference type="Pfam" id="PF00009">
    <property type="entry name" value="GTP_EFTU"/>
    <property type="match status" value="1"/>
</dbReference>
<dbReference type="Pfam" id="PF03144">
    <property type="entry name" value="GTP_EFTU_D2"/>
    <property type="match status" value="1"/>
</dbReference>
<dbReference type="Pfam" id="PF11987">
    <property type="entry name" value="IF-2"/>
    <property type="match status" value="1"/>
</dbReference>
<dbReference type="Pfam" id="PF08364">
    <property type="entry name" value="IF2_assoc"/>
    <property type="match status" value="1"/>
</dbReference>
<dbReference type="Pfam" id="PF04760">
    <property type="entry name" value="IF2_N"/>
    <property type="match status" value="1"/>
</dbReference>
<dbReference type="SUPFAM" id="SSF52156">
    <property type="entry name" value="Initiation factor IF2/eIF5b, domain 3"/>
    <property type="match status" value="1"/>
</dbReference>
<dbReference type="SUPFAM" id="SSF52540">
    <property type="entry name" value="P-loop containing nucleoside triphosphate hydrolases"/>
    <property type="match status" value="1"/>
</dbReference>
<dbReference type="SUPFAM" id="SSF50447">
    <property type="entry name" value="Translation proteins"/>
    <property type="match status" value="2"/>
</dbReference>
<dbReference type="PROSITE" id="PS51722">
    <property type="entry name" value="G_TR_2"/>
    <property type="match status" value="1"/>
</dbReference>
<dbReference type="PROSITE" id="PS01176">
    <property type="entry name" value="IF2"/>
    <property type="match status" value="1"/>
</dbReference>
<gene>
    <name evidence="2" type="primary">infB</name>
    <name type="ordered locus">BRADO0053</name>
</gene>
<keyword id="KW-0963">Cytoplasm</keyword>
<keyword id="KW-0342">GTP-binding</keyword>
<keyword id="KW-0396">Initiation factor</keyword>
<keyword id="KW-0547">Nucleotide-binding</keyword>
<keyword id="KW-0648">Protein biosynthesis</keyword>
<keyword id="KW-1185">Reference proteome</keyword>
<name>IF2_BRASO</name>
<sequence>MADQNTPGDKKLGVPSKTLTLKPRVETGTVRQSFPHGRSKQVVVEKRGTKRRVGDGAPDAPHAPEPTVAKAPPPPPPSNRPSGPRPSGGQQRGGSGVVLRTLTEDERSARASALADARVRDLEERRQAEEEARRRAEREAAERAEREAAEARRKAEEERHRHEEEAKRKAELEAKKRFGEGEAPRPAAAAPQPTVSAPARPAQAPGRPQGAPGSRPQQIGGPSSRPGGSQPGGARPAGPRPAGGGPLGRAPAAVAAGPDEDEGPRQIRRGPGGAARPAPPPKTTHKPGPQKQRGRLTVVTALNADDVRERSIASFRRRTQRLKGHAANEQKEKLVREVTIPEAITIQELANRMSERAVDVIRLLMRQGAMHKITDVIDADTAQLIAEELGHTVKRVAASDVEEGLFDVVDDSTDTEPRSPVVTVMGHVDHGKTSLLDALRHANVVSGEAGGITQHIGAYQVTAPDSGKKITFIDTPGHAAFTAMRARGAKVTDIVVLVVAADDGVMPQTIEAINHAKAAKVPMIVAINKIDKPDARPERVRTELLQHEVQVESLGGDVVDVEVSAKNKTNLDRLLEMIALQADILDLKTNSDRPAEGTVIEAKLDRGRGPVATVLVQRGTLRVGDIIVAGAEMGRVRALISDQGETLQEAGPSVPVEVLGFNGPPEAGDRLAVVENEARARQVTSYRAHQKRENAAASISGMRGSLEQMMSQLKTAGRKEFPLVIKADVQGSLEAILGSLEKLGTEEVAARILHAGVGGISESDVTLAEGFNAAIIGFSVRANKEAAALAKRNGIEIRYYNIIYDLVDDVKKAMSGLLAPTLRETMLGNAQILEVFNISKVGKVAGCRVTDGTVERGANVRLIRDNVVVHEGKLSTLKRFKDEVKDVQAGQECGMAFENYGDMRVGDVIECYRVETIQRSL</sequence>